<keyword id="KW-0963">Cytoplasm</keyword>
<keyword id="KW-0328">Glycosyltransferase</keyword>
<keyword id="KW-0660">Purine salvage</keyword>
<keyword id="KW-1185">Reference proteome</keyword>
<keyword id="KW-0808">Transferase</keyword>
<reference key="1">
    <citation type="submission" date="2006-10" db="EMBL/GenBank/DDBJ databases">
        <authorList>
            <person name="Fleischmann R.D."/>
            <person name="Dodson R.J."/>
            <person name="Haft D.H."/>
            <person name="Merkel J.S."/>
            <person name="Nelson W.C."/>
            <person name="Fraser C.M."/>
        </authorList>
    </citation>
    <scope>NUCLEOTIDE SEQUENCE [LARGE SCALE GENOMIC DNA]</scope>
    <source>
        <strain>ATCC 700084 / mc(2)155</strain>
    </source>
</reference>
<reference key="2">
    <citation type="journal article" date="2007" name="Genome Biol.">
        <title>Interrupted coding sequences in Mycobacterium smegmatis: authentic mutations or sequencing errors?</title>
        <authorList>
            <person name="Deshayes C."/>
            <person name="Perrodou E."/>
            <person name="Gallien S."/>
            <person name="Euphrasie D."/>
            <person name="Schaeffer C."/>
            <person name="Van-Dorsselaer A."/>
            <person name="Poch O."/>
            <person name="Lecompte O."/>
            <person name="Reyrat J.-M."/>
        </authorList>
    </citation>
    <scope>NUCLEOTIDE SEQUENCE [LARGE SCALE GENOMIC DNA]</scope>
    <source>
        <strain>ATCC 700084 / mc(2)155</strain>
    </source>
</reference>
<reference key="3">
    <citation type="journal article" date="2009" name="Genome Res.">
        <title>Ortho-proteogenomics: multiple proteomes investigation through orthology and a new MS-based protocol.</title>
        <authorList>
            <person name="Gallien S."/>
            <person name="Perrodou E."/>
            <person name="Carapito C."/>
            <person name="Deshayes C."/>
            <person name="Reyrat J.-M."/>
            <person name="Van Dorsselaer A."/>
            <person name="Poch O."/>
            <person name="Schaeffer C."/>
            <person name="Lecompte O."/>
        </authorList>
    </citation>
    <scope>NUCLEOTIDE SEQUENCE [LARGE SCALE GENOMIC DNA]</scope>
    <scope>IDENTIFICATION BY MASS SPECTROMETRY [LARGE SCALE ANALYSIS]</scope>
    <source>
        <strain>ATCC 700084 / mc(2)155</strain>
    </source>
</reference>
<protein>
    <recommendedName>
        <fullName evidence="1">Adenine phosphoribosyltransferase</fullName>
        <shortName evidence="1">APRT</shortName>
        <ecNumber evidence="1">2.4.2.7</ecNumber>
    </recommendedName>
</protein>
<accession>A0QWJ5</accession>
<accession>I7GA47</accession>
<comment type="function">
    <text evidence="1">Catalyzes a salvage reaction resulting in the formation of AMP, that is energically less costly than de novo synthesis.</text>
</comment>
<comment type="catalytic activity">
    <reaction evidence="1">
        <text>AMP + diphosphate = 5-phospho-alpha-D-ribose 1-diphosphate + adenine</text>
        <dbReference type="Rhea" id="RHEA:16609"/>
        <dbReference type="ChEBI" id="CHEBI:16708"/>
        <dbReference type="ChEBI" id="CHEBI:33019"/>
        <dbReference type="ChEBI" id="CHEBI:58017"/>
        <dbReference type="ChEBI" id="CHEBI:456215"/>
        <dbReference type="EC" id="2.4.2.7"/>
    </reaction>
</comment>
<comment type="pathway">
    <text evidence="1">Purine metabolism; AMP biosynthesis via salvage pathway; AMP from adenine: step 1/1.</text>
</comment>
<comment type="subunit">
    <text evidence="1">Homodimer.</text>
</comment>
<comment type="subcellular location">
    <subcellularLocation>
        <location evidence="1">Cytoplasm</location>
    </subcellularLocation>
</comment>
<comment type="similarity">
    <text evidence="1">Belongs to the purine/pyrimidine phosphoribosyltransferase family.</text>
</comment>
<name>APT_MYCS2</name>
<organism>
    <name type="scientific">Mycolicibacterium smegmatis (strain ATCC 700084 / mc(2)155)</name>
    <name type="common">Mycobacterium smegmatis</name>
    <dbReference type="NCBI Taxonomy" id="246196"/>
    <lineage>
        <taxon>Bacteria</taxon>
        <taxon>Bacillati</taxon>
        <taxon>Actinomycetota</taxon>
        <taxon>Actinomycetes</taxon>
        <taxon>Mycobacteriales</taxon>
        <taxon>Mycobacteriaceae</taxon>
        <taxon>Mycolicibacterium</taxon>
    </lineage>
</organism>
<proteinExistence type="evidence at protein level"/>
<sequence length="180" mass="18385">MTQHHDTAEVSRVIATLTREVADFPEPGIQFKDLTPLLADARGLRVVTDALADIASGADLVAGLDARGFLLGAAVATRLGTGVLAVRKGGKLPPPVHGATYQLEYGTATLEIPAEGIDIAGRNVVIIDDVLATGGTLAAAARLLGDCGANVTGAGVVLELEALRGREAVAPLGVRSLHII</sequence>
<dbReference type="EC" id="2.4.2.7" evidence="1"/>
<dbReference type="EMBL" id="CP000480">
    <property type="protein sequence ID" value="ABK71166.1"/>
    <property type="molecule type" value="Genomic_DNA"/>
</dbReference>
<dbReference type="EMBL" id="CP001663">
    <property type="protein sequence ID" value="AFP39354.1"/>
    <property type="molecule type" value="Genomic_DNA"/>
</dbReference>
<dbReference type="RefSeq" id="WP_011728726.1">
    <property type="nucleotide sequence ID" value="NZ_SIJM01000002.1"/>
</dbReference>
<dbReference type="RefSeq" id="YP_887283.1">
    <property type="nucleotide sequence ID" value="NC_008596.1"/>
</dbReference>
<dbReference type="SMR" id="A0QWJ5"/>
<dbReference type="STRING" id="246196.MSMEG_2964"/>
<dbReference type="PaxDb" id="246196-MSMEI_2890"/>
<dbReference type="KEGG" id="msb:LJ00_14750"/>
<dbReference type="KEGG" id="msg:MSMEI_2890"/>
<dbReference type="KEGG" id="msm:MSMEG_2964"/>
<dbReference type="PATRIC" id="fig|246196.19.peg.2927"/>
<dbReference type="eggNOG" id="COG0503">
    <property type="taxonomic scope" value="Bacteria"/>
</dbReference>
<dbReference type="OrthoDB" id="9803963at2"/>
<dbReference type="UniPathway" id="UPA00588">
    <property type="reaction ID" value="UER00646"/>
</dbReference>
<dbReference type="Proteomes" id="UP000000757">
    <property type="component" value="Chromosome"/>
</dbReference>
<dbReference type="Proteomes" id="UP000006158">
    <property type="component" value="Chromosome"/>
</dbReference>
<dbReference type="GO" id="GO:0005737">
    <property type="term" value="C:cytoplasm"/>
    <property type="evidence" value="ECO:0007669"/>
    <property type="project" value="UniProtKB-SubCell"/>
</dbReference>
<dbReference type="GO" id="GO:0002055">
    <property type="term" value="F:adenine binding"/>
    <property type="evidence" value="ECO:0007669"/>
    <property type="project" value="TreeGrafter"/>
</dbReference>
<dbReference type="GO" id="GO:0003999">
    <property type="term" value="F:adenine phosphoribosyltransferase activity"/>
    <property type="evidence" value="ECO:0007669"/>
    <property type="project" value="UniProtKB-UniRule"/>
</dbReference>
<dbReference type="GO" id="GO:0016208">
    <property type="term" value="F:AMP binding"/>
    <property type="evidence" value="ECO:0007669"/>
    <property type="project" value="TreeGrafter"/>
</dbReference>
<dbReference type="GO" id="GO:0006168">
    <property type="term" value="P:adenine salvage"/>
    <property type="evidence" value="ECO:0007669"/>
    <property type="project" value="InterPro"/>
</dbReference>
<dbReference type="GO" id="GO:0044209">
    <property type="term" value="P:AMP salvage"/>
    <property type="evidence" value="ECO:0007669"/>
    <property type="project" value="UniProtKB-UniRule"/>
</dbReference>
<dbReference type="GO" id="GO:0006166">
    <property type="term" value="P:purine ribonucleoside salvage"/>
    <property type="evidence" value="ECO:0007669"/>
    <property type="project" value="UniProtKB-KW"/>
</dbReference>
<dbReference type="CDD" id="cd06223">
    <property type="entry name" value="PRTases_typeI"/>
    <property type="match status" value="1"/>
</dbReference>
<dbReference type="FunFam" id="3.40.50.2020:FF:000021">
    <property type="entry name" value="Adenine phosphoribosyltransferase"/>
    <property type="match status" value="1"/>
</dbReference>
<dbReference type="Gene3D" id="3.40.50.2020">
    <property type="match status" value="1"/>
</dbReference>
<dbReference type="HAMAP" id="MF_00004">
    <property type="entry name" value="Aden_phosphoribosyltr"/>
    <property type="match status" value="1"/>
</dbReference>
<dbReference type="InterPro" id="IPR005764">
    <property type="entry name" value="Ade_phspho_trans"/>
</dbReference>
<dbReference type="InterPro" id="IPR000836">
    <property type="entry name" value="PRibTrfase_dom"/>
</dbReference>
<dbReference type="InterPro" id="IPR029057">
    <property type="entry name" value="PRTase-like"/>
</dbReference>
<dbReference type="InterPro" id="IPR050054">
    <property type="entry name" value="UPRTase/APRTase"/>
</dbReference>
<dbReference type="NCBIfam" id="NF002636">
    <property type="entry name" value="PRK02304.1-5"/>
    <property type="match status" value="1"/>
</dbReference>
<dbReference type="PANTHER" id="PTHR32315">
    <property type="entry name" value="ADENINE PHOSPHORIBOSYLTRANSFERASE"/>
    <property type="match status" value="1"/>
</dbReference>
<dbReference type="PANTHER" id="PTHR32315:SF3">
    <property type="entry name" value="ADENINE PHOSPHORIBOSYLTRANSFERASE"/>
    <property type="match status" value="1"/>
</dbReference>
<dbReference type="Pfam" id="PF00156">
    <property type="entry name" value="Pribosyltran"/>
    <property type="match status" value="1"/>
</dbReference>
<dbReference type="SUPFAM" id="SSF53271">
    <property type="entry name" value="PRTase-like"/>
    <property type="match status" value="1"/>
</dbReference>
<dbReference type="PROSITE" id="PS00103">
    <property type="entry name" value="PUR_PYR_PR_TRANSFER"/>
    <property type="match status" value="1"/>
</dbReference>
<evidence type="ECO:0000255" key="1">
    <source>
        <dbReference type="HAMAP-Rule" id="MF_00004"/>
    </source>
</evidence>
<feature type="chain" id="PRO_1000000311" description="Adenine phosphoribosyltransferase">
    <location>
        <begin position="1"/>
        <end position="180"/>
    </location>
</feature>
<gene>
    <name evidence="1" type="primary">apt</name>
    <name type="ordered locus">MSMEG_2964</name>
    <name type="ordered locus">MSMEI_2890</name>
</gene>